<organism>
    <name type="scientific">Bos taurus</name>
    <name type="common">Bovine</name>
    <dbReference type="NCBI Taxonomy" id="9913"/>
    <lineage>
        <taxon>Eukaryota</taxon>
        <taxon>Metazoa</taxon>
        <taxon>Chordata</taxon>
        <taxon>Craniata</taxon>
        <taxon>Vertebrata</taxon>
        <taxon>Euteleostomi</taxon>
        <taxon>Mammalia</taxon>
        <taxon>Eutheria</taxon>
        <taxon>Laurasiatheria</taxon>
        <taxon>Artiodactyla</taxon>
        <taxon>Ruminantia</taxon>
        <taxon>Pecora</taxon>
        <taxon>Bovidae</taxon>
        <taxon>Bovinae</taxon>
        <taxon>Bos</taxon>
    </lineage>
</organism>
<name>RPAC1_BOVIN</name>
<sequence>MAAAQAVEEMRTRVVLGEFGVRNVHTTDFPGNYSGYDDAWDQDRFEKNFRVDVVHMDENSLEFDMVGIDAAIANAFRRILLAEVPTMAVEKVLVYNNTSIVQDEILAHRLGLIPIHADPRLFEYRNQGDEGGTEIDTLQFRLQVRCTRNPHAAKDSSDPNELYVNHRVYTRHMTWVPLGNQADLFPEGAIRPVHDDILIAQLRPGQEIDLLMHCVKGIGKDHAKFSPVATASYRLLPDITLLEPVEGEAAEELSRCFSPGVIEVQEIQGKKVARVANPRLDTFSREVFRNEKLKKVVRLARVRDHFIFSVESTGVLPPDVLVSEAIKVLMGKCQRFLDELDAVQMD</sequence>
<feature type="initiator methionine" description="Removed" evidence="1">
    <location>
        <position position="1"/>
    </location>
</feature>
<feature type="chain" id="PRO_0000291381" description="DNA-directed RNA polymerases I and III subunit RPAC1">
    <location>
        <begin position="2"/>
        <end position="346"/>
    </location>
</feature>
<feature type="modified residue" description="N-acetylalanine" evidence="1">
    <location>
        <position position="2"/>
    </location>
</feature>
<accession>Q32L22</accession>
<gene>
    <name type="primary">POLR1C</name>
</gene>
<dbReference type="EMBL" id="BC109803">
    <property type="protein sequence ID" value="AAI09804.1"/>
    <property type="molecule type" value="mRNA"/>
</dbReference>
<dbReference type="RefSeq" id="NP_001033213.1">
    <property type="nucleotide sequence ID" value="NM_001038124.2"/>
</dbReference>
<dbReference type="SMR" id="Q32L22"/>
<dbReference type="FunCoup" id="Q32L22">
    <property type="interactions" value="3498"/>
</dbReference>
<dbReference type="STRING" id="9913.ENSBTAP00000025246"/>
<dbReference type="PaxDb" id="9913-ENSBTAP00000025246"/>
<dbReference type="PeptideAtlas" id="Q32L22"/>
<dbReference type="Ensembl" id="ENSBTAT00000025246.4">
    <property type="protein sequence ID" value="ENSBTAP00000025246.3"/>
    <property type="gene ID" value="ENSBTAG00000018969.4"/>
</dbReference>
<dbReference type="GeneID" id="516337"/>
<dbReference type="KEGG" id="bta:516337"/>
<dbReference type="CTD" id="9533"/>
<dbReference type="VEuPathDB" id="HostDB:ENSBTAG00000018969"/>
<dbReference type="VGNC" id="VGNC:33133">
    <property type="gene designation" value="POLR1C"/>
</dbReference>
<dbReference type="eggNOG" id="KOG1521">
    <property type="taxonomic scope" value="Eukaryota"/>
</dbReference>
<dbReference type="GeneTree" id="ENSGT00950000183100"/>
<dbReference type="HOGENOM" id="CLU_038421_0_1_1"/>
<dbReference type="InParanoid" id="Q32L22"/>
<dbReference type="OMA" id="KKKCRAF"/>
<dbReference type="OrthoDB" id="270173at2759"/>
<dbReference type="TreeFam" id="TF103034"/>
<dbReference type="Reactome" id="R-BTA-5250924">
    <property type="pathway name" value="B-WICH complex positively regulates rRNA expression"/>
</dbReference>
<dbReference type="Reactome" id="R-BTA-73762">
    <property type="pathway name" value="RNA Polymerase I Transcription Initiation"/>
</dbReference>
<dbReference type="Reactome" id="R-BTA-73772">
    <property type="pathway name" value="RNA Polymerase I Promoter Escape"/>
</dbReference>
<dbReference type="Reactome" id="R-BTA-73863">
    <property type="pathway name" value="RNA Polymerase I Transcription Termination"/>
</dbReference>
<dbReference type="Reactome" id="R-BTA-76061">
    <property type="pathway name" value="RNA Polymerase III Transcription Initiation From Type 1 Promoter"/>
</dbReference>
<dbReference type="Reactome" id="R-BTA-76066">
    <property type="pathway name" value="RNA Polymerase III Transcription Initiation From Type 2 Promoter"/>
</dbReference>
<dbReference type="Reactome" id="R-BTA-76071">
    <property type="pathway name" value="RNA Polymerase III Transcription Initiation From Type 3 Promoter"/>
</dbReference>
<dbReference type="CD-CODE" id="D7FE2080">
    <property type="entry name" value="Nucleolus"/>
</dbReference>
<dbReference type="Proteomes" id="UP000009136">
    <property type="component" value="Chromosome 23"/>
</dbReference>
<dbReference type="Bgee" id="ENSBTAG00000018969">
    <property type="expression patterns" value="Expressed in olfactory segment of nasal mucosa and 104 other cell types or tissues"/>
</dbReference>
<dbReference type="GO" id="GO:0005829">
    <property type="term" value="C:cytosol"/>
    <property type="evidence" value="ECO:0007669"/>
    <property type="project" value="UniProtKB-SubCell"/>
</dbReference>
<dbReference type="GO" id="GO:0001650">
    <property type="term" value="C:fibrillar center"/>
    <property type="evidence" value="ECO:0007669"/>
    <property type="project" value="Ensembl"/>
</dbReference>
<dbReference type="GO" id="GO:0005654">
    <property type="term" value="C:nucleoplasm"/>
    <property type="evidence" value="ECO:0007669"/>
    <property type="project" value="Ensembl"/>
</dbReference>
<dbReference type="GO" id="GO:0005736">
    <property type="term" value="C:RNA polymerase I complex"/>
    <property type="evidence" value="ECO:0000318"/>
    <property type="project" value="GO_Central"/>
</dbReference>
<dbReference type="GO" id="GO:0005666">
    <property type="term" value="C:RNA polymerase III complex"/>
    <property type="evidence" value="ECO:0000318"/>
    <property type="project" value="GO_Central"/>
</dbReference>
<dbReference type="GO" id="GO:0003677">
    <property type="term" value="F:DNA binding"/>
    <property type="evidence" value="ECO:0007669"/>
    <property type="project" value="InterPro"/>
</dbReference>
<dbReference type="GO" id="GO:0003899">
    <property type="term" value="F:DNA-directed RNA polymerase activity"/>
    <property type="evidence" value="ECO:0007669"/>
    <property type="project" value="InterPro"/>
</dbReference>
<dbReference type="GO" id="GO:0046983">
    <property type="term" value="F:protein dimerization activity"/>
    <property type="evidence" value="ECO:0007669"/>
    <property type="project" value="InterPro"/>
</dbReference>
<dbReference type="GO" id="GO:0006351">
    <property type="term" value="P:DNA-templated transcription"/>
    <property type="evidence" value="ECO:0007669"/>
    <property type="project" value="InterPro"/>
</dbReference>
<dbReference type="CDD" id="cd07032">
    <property type="entry name" value="RNAP_I_II_AC40"/>
    <property type="match status" value="1"/>
</dbReference>
<dbReference type="FunFam" id="2.170.120.12:FF:000003">
    <property type="entry name" value="Dna-directed rna polymerases i and iii subunit"/>
    <property type="match status" value="1"/>
</dbReference>
<dbReference type="FunFam" id="3.30.1360.10:FF:000005">
    <property type="entry name" value="Dna-directed rna polymerases i and iii subunit"/>
    <property type="match status" value="1"/>
</dbReference>
<dbReference type="FunFam" id="3.30.1360.10:FF:000009">
    <property type="entry name" value="RNA polymerase I and III subunit C"/>
    <property type="match status" value="1"/>
</dbReference>
<dbReference type="Gene3D" id="2.170.120.12">
    <property type="entry name" value="DNA-directed RNA polymerase, insert domain"/>
    <property type="match status" value="1"/>
</dbReference>
<dbReference type="Gene3D" id="3.30.1360.10">
    <property type="entry name" value="RNA polymerase, RBP11-like subunit"/>
    <property type="match status" value="1"/>
</dbReference>
<dbReference type="HAMAP" id="MF_00320">
    <property type="entry name" value="RNApol_arch_Rpo3"/>
    <property type="match status" value="1"/>
</dbReference>
<dbReference type="InterPro" id="IPR001514">
    <property type="entry name" value="DNA-dir_RNA_pol_30-40kDasu_CS"/>
</dbReference>
<dbReference type="InterPro" id="IPR011262">
    <property type="entry name" value="DNA-dir_RNA_pol_insert"/>
</dbReference>
<dbReference type="InterPro" id="IPR011263">
    <property type="entry name" value="DNA-dir_RNA_pol_RpoA/D/Rpb3"/>
</dbReference>
<dbReference type="InterPro" id="IPR036603">
    <property type="entry name" value="RBP11-like"/>
</dbReference>
<dbReference type="InterPro" id="IPR022842">
    <property type="entry name" value="RNAP_Rpo3/Rpb3/RPAC1"/>
</dbReference>
<dbReference type="InterPro" id="IPR033901">
    <property type="entry name" value="RNAPI/III_AC40"/>
</dbReference>
<dbReference type="InterPro" id="IPR036643">
    <property type="entry name" value="RNApol_insert_sf"/>
</dbReference>
<dbReference type="InterPro" id="IPR050518">
    <property type="entry name" value="Rpo3/RPB3_RNA_Pol_subunit"/>
</dbReference>
<dbReference type="PANTHER" id="PTHR11800">
    <property type="entry name" value="DNA-DIRECTED RNA POLYMERASE"/>
    <property type="match status" value="1"/>
</dbReference>
<dbReference type="PANTHER" id="PTHR11800:SF13">
    <property type="entry name" value="DNA-DIRECTED RNA POLYMERASES I AND III SUBUNIT RPAC1"/>
    <property type="match status" value="1"/>
</dbReference>
<dbReference type="Pfam" id="PF01000">
    <property type="entry name" value="RNA_pol_A_bac"/>
    <property type="match status" value="1"/>
</dbReference>
<dbReference type="Pfam" id="PF01193">
    <property type="entry name" value="RNA_pol_L"/>
    <property type="match status" value="1"/>
</dbReference>
<dbReference type="SMART" id="SM00662">
    <property type="entry name" value="RPOLD"/>
    <property type="match status" value="1"/>
</dbReference>
<dbReference type="SUPFAM" id="SSF56553">
    <property type="entry name" value="Insert subdomain of RNA polymerase alpha subunit"/>
    <property type="match status" value="1"/>
</dbReference>
<dbReference type="SUPFAM" id="SSF55257">
    <property type="entry name" value="RBP11-like subunits of RNA polymerase"/>
    <property type="match status" value="1"/>
</dbReference>
<dbReference type="PROSITE" id="PS00446">
    <property type="entry name" value="RNA_POL_D_30KD"/>
    <property type="match status" value="1"/>
</dbReference>
<protein>
    <recommendedName>
        <fullName>DNA-directed RNA polymerases I and III subunit RPAC1</fullName>
        <shortName>DNA-directed RNA polymerase I subunit C</shortName>
        <shortName>RNA polymerases I and III subunit AC1</shortName>
    </recommendedName>
</protein>
<keyword id="KW-0007">Acetylation</keyword>
<keyword id="KW-0963">Cytoplasm</keyword>
<keyword id="KW-0240">DNA-directed RNA polymerase</keyword>
<keyword id="KW-0539">Nucleus</keyword>
<keyword id="KW-1185">Reference proteome</keyword>
<keyword id="KW-0804">Transcription</keyword>
<comment type="function">
    <text evidence="1 2">DNA-dependent RNA polymerase catalyzes the transcription of DNA into RNA using the four ribonucleoside triphosphates as substrates. Common component of RNA polymerases I and III which synthesize ribosomal RNA precursors and short non-coding RNAs including 5S rRNA, snRNAs, tRNAs and miRNAs, respectively. POLR1C/RPAC1 is part of the polymerase core and may function as a clamp element that moves to open and close the cleft (By similarity).</text>
</comment>
<comment type="subunit">
    <text evidence="1">Component of the RNA polymerase I and RNA polymerase III complexes consisting of at least 13 and 17 subunits, respectively (By similarity). Pol I complex consists of a ten-subunit catalytic core composed of POLR1A/RPA1, POLR1B/RPA2, POLR1C/RPAC1, POLR1D/RPAC2, POLR1H/RPA12, POLR2E/RPABC1, POLR2F/RPABC2, POLR2H/RPABC3, POLR2K/RPABC4 and POLR2L/RPABC5; a mobile stalk subunit POLR1F/RPA43 protruding from the core and additional subunits homologous to general transcription factors POLR1E/RPA49 and POLR1G/RPA34. Part of Pol I pre-initiation complex (PIC), in which Pol I core assembles with RRN3 and promoter-bound UTBF and SL1/TIF-IB complex (By similarity). Pol III complex consists of a ten-subunit catalytic core composed of POLR3A/RPC1, POLR3B/RPC2, POLR1C/RPAC1, POLR1D/RPAC2, POLR3K/RPC10, POLR2E/RPABC1, POLR2F/RPABC2, POLR2H/RPABC3, POLR2K/RPABC4 and POLR2L/RPABC5; a mobile stalk composed of two subunits POLR3H/RPC8 and CRCP/RPC9, protruding from the core and functioning primarily in transcription initiation; and additional subunits homologous to general transcription factors of the RNA polymerase II machinery, POLR3C/RPC3-POLR3F/RPC6-POLR3G/RPC7 heterotrimer required for transcription initiation and POLR3D/RPC4-POLR3E/RPC5 heterodimer involved in both transcription initiation and termination (By similarity).</text>
</comment>
<comment type="subcellular location">
    <subcellularLocation>
        <location evidence="1">Nucleus</location>
    </subcellularLocation>
    <subcellularLocation>
        <location evidence="1">Cytoplasm</location>
        <location evidence="1">Cytosol</location>
    </subcellularLocation>
</comment>
<comment type="similarity">
    <text evidence="3">Belongs to the archaeal Rpo3/eukaryotic RPB3 RNA polymerase subunit family.</text>
</comment>
<evidence type="ECO:0000250" key="1">
    <source>
        <dbReference type="UniProtKB" id="O15160"/>
    </source>
</evidence>
<evidence type="ECO:0000250" key="2">
    <source>
        <dbReference type="UniProtKB" id="P07703"/>
    </source>
</evidence>
<evidence type="ECO:0000305" key="3"/>
<reference key="1">
    <citation type="submission" date="2005-11" db="EMBL/GenBank/DDBJ databases">
        <authorList>
            <consortium name="NIH - Mammalian Gene Collection (MGC) project"/>
        </authorList>
    </citation>
    <scope>NUCLEOTIDE SEQUENCE [LARGE SCALE MRNA]</scope>
    <source>
        <strain>Crossbred X Angus</strain>
        <tissue>Liver</tissue>
    </source>
</reference>
<proteinExistence type="evidence at transcript level"/>